<evidence type="ECO:0000255" key="1">
    <source>
        <dbReference type="HAMAP-Rule" id="MF_00849"/>
    </source>
</evidence>
<evidence type="ECO:0000305" key="2"/>
<feature type="chain" id="PRO_0000091553" description="Large ribosomal subunit assembly factor BipA">
    <location>
        <begin position="1"/>
        <end position="607"/>
    </location>
</feature>
<feature type="domain" description="tr-type G" evidence="1">
    <location>
        <begin position="3"/>
        <end position="198"/>
    </location>
</feature>
<feature type="binding site" evidence="1">
    <location>
        <begin position="15"/>
        <end position="20"/>
    </location>
    <ligand>
        <name>GTP</name>
        <dbReference type="ChEBI" id="CHEBI:37565"/>
    </ligand>
</feature>
<feature type="binding site" evidence="1">
    <location>
        <begin position="128"/>
        <end position="131"/>
    </location>
    <ligand>
        <name>GTP</name>
        <dbReference type="ChEBI" id="CHEBI:37565"/>
    </ligand>
</feature>
<sequence length="607" mass="67355">MIEKLRNIAIIAHVDHGKTTLVDKLLQQSGTFDSRAETQERVMDSNDLEKERGITILAKNTAIKWNDYRINIVDTPGHADFGGEVERVMSMVDSVLLVVDAFDGPMPQTRFVTKKAFAYGLKPIVVINKVDRPGARPDWVVDQVFDLFVNLDATDEQLDFPIVYASALNGIAGLDHEDMAEDMTPLYQAIVDHVPAPDVDLDGPFQMQISQLDYNSYVGVIGIGRIKRGKVKPNQQVTIIDSEGKTRNAKVGKVLGHLGLERIETDLAEAGDIVAITGLGELNISDTVCDTQNVEALPALSVDEPTVSMFFCVNTSPFCGKEGKFVTSRQILDRLNKELVHNVALRVEETEDADAFRVSGRGELHLSVLIENMRREGFELAVSRPKVIFREIDGRKQEPYENVTLDVEEQHQGSVMQALGERKGDLKNMNPDGKGRVRLDYVIPSRGLIGFRSEFMTMTSGTGLLYSTFSHYDDVRPGEVGQRQNGVLISNGQGKAVAFALFGLQDRGKLFLGHGAEVYEGQIIGIHSRSNDLTVNCLTGKKLTNMRASGTDEAVVLVPPIRMTLEQALEFIDDDELVEVTPTSIRIRKRHLTENDRRRANRAPKDD</sequence>
<keyword id="KW-0963">Cytoplasm</keyword>
<keyword id="KW-0342">GTP-binding</keyword>
<keyword id="KW-0378">Hydrolase</keyword>
<keyword id="KW-0547">Nucleotide-binding</keyword>
<keyword id="KW-1185">Reference proteome</keyword>
<keyword id="KW-0690">Ribosome biogenesis</keyword>
<keyword id="KW-0694">RNA-binding</keyword>
<keyword id="KW-0699">rRNA-binding</keyword>
<keyword id="KW-0820">tRNA-binding</keyword>
<name>BIPA_ECO57</name>
<proteinExistence type="inferred from homology"/>
<gene>
    <name evidence="1" type="primary">bipA</name>
    <name type="ordered locus">Z5407</name>
    <name type="ordered locus">ECs4793</name>
</gene>
<dbReference type="EC" id="3.6.5.-" evidence="1"/>
<dbReference type="EMBL" id="AE005174">
    <property type="protein sequence ID" value="AAG59060.1"/>
    <property type="molecule type" value="Genomic_DNA"/>
</dbReference>
<dbReference type="EMBL" id="BA000007">
    <property type="protein sequence ID" value="BAB38216.1"/>
    <property type="molecule type" value="Genomic_DNA"/>
</dbReference>
<dbReference type="PIR" id="A91228">
    <property type="entry name" value="A91228"/>
</dbReference>
<dbReference type="PIR" id="H86074">
    <property type="entry name" value="H86074"/>
</dbReference>
<dbReference type="SMR" id="P0A3B3"/>
<dbReference type="STRING" id="155864.Z5407"/>
<dbReference type="KEGG" id="ece:Z5407"/>
<dbReference type="KEGG" id="ecs:ECs_4793"/>
<dbReference type="PATRIC" id="fig|386585.9.peg.5008"/>
<dbReference type="eggNOG" id="COG1217">
    <property type="taxonomic scope" value="Bacteria"/>
</dbReference>
<dbReference type="HOGENOM" id="CLU_017016_4_0_6"/>
<dbReference type="OMA" id="MSMLFTI"/>
<dbReference type="Proteomes" id="UP000000558">
    <property type="component" value="Chromosome"/>
</dbReference>
<dbReference type="Proteomes" id="UP000002519">
    <property type="component" value="Chromosome"/>
</dbReference>
<dbReference type="GO" id="GO:0005829">
    <property type="term" value="C:cytosol"/>
    <property type="evidence" value="ECO:0007669"/>
    <property type="project" value="TreeGrafter"/>
</dbReference>
<dbReference type="GO" id="GO:1990904">
    <property type="term" value="C:ribonucleoprotein complex"/>
    <property type="evidence" value="ECO:0007669"/>
    <property type="project" value="TreeGrafter"/>
</dbReference>
<dbReference type="GO" id="GO:0005525">
    <property type="term" value="F:GTP binding"/>
    <property type="evidence" value="ECO:0007669"/>
    <property type="project" value="UniProtKB-UniRule"/>
</dbReference>
<dbReference type="GO" id="GO:0003924">
    <property type="term" value="F:GTPase activity"/>
    <property type="evidence" value="ECO:0007669"/>
    <property type="project" value="UniProtKB-UniRule"/>
</dbReference>
<dbReference type="GO" id="GO:0097216">
    <property type="term" value="F:guanosine tetraphosphate binding"/>
    <property type="evidence" value="ECO:0007669"/>
    <property type="project" value="UniProtKB-ARBA"/>
</dbReference>
<dbReference type="GO" id="GO:0043022">
    <property type="term" value="F:ribosome binding"/>
    <property type="evidence" value="ECO:0007669"/>
    <property type="project" value="UniProtKB-UniRule"/>
</dbReference>
<dbReference type="GO" id="GO:0019843">
    <property type="term" value="F:rRNA binding"/>
    <property type="evidence" value="ECO:0007669"/>
    <property type="project" value="UniProtKB-KW"/>
</dbReference>
<dbReference type="GO" id="GO:0000049">
    <property type="term" value="F:tRNA binding"/>
    <property type="evidence" value="ECO:0007669"/>
    <property type="project" value="UniProtKB-KW"/>
</dbReference>
<dbReference type="GO" id="GO:0000027">
    <property type="term" value="P:ribosomal large subunit assembly"/>
    <property type="evidence" value="ECO:0007669"/>
    <property type="project" value="UniProtKB-UniRule"/>
</dbReference>
<dbReference type="CDD" id="cd16263">
    <property type="entry name" value="BipA_III"/>
    <property type="match status" value="1"/>
</dbReference>
<dbReference type="CDD" id="cd03710">
    <property type="entry name" value="BipA_TypA_C"/>
    <property type="match status" value="1"/>
</dbReference>
<dbReference type="CDD" id="cd03691">
    <property type="entry name" value="BipA_TypA_II"/>
    <property type="match status" value="1"/>
</dbReference>
<dbReference type="CDD" id="cd01891">
    <property type="entry name" value="TypA_BipA"/>
    <property type="match status" value="1"/>
</dbReference>
<dbReference type="FunFam" id="2.40.30.10:FF:000016">
    <property type="entry name" value="GTP-binding protein TypA"/>
    <property type="match status" value="1"/>
</dbReference>
<dbReference type="FunFam" id="2.40.50.250:FF:000001">
    <property type="entry name" value="GTP-binding protein TypA"/>
    <property type="match status" value="1"/>
</dbReference>
<dbReference type="FunFam" id="3.30.70.240:FF:000002">
    <property type="entry name" value="GTP-binding protein TypA"/>
    <property type="match status" value="1"/>
</dbReference>
<dbReference type="FunFam" id="3.30.70.870:FF:000003">
    <property type="entry name" value="GTP-binding protein TypA"/>
    <property type="match status" value="1"/>
</dbReference>
<dbReference type="FunFam" id="3.40.50.300:FF:000055">
    <property type="entry name" value="GTP-binding protein TypA"/>
    <property type="match status" value="1"/>
</dbReference>
<dbReference type="Gene3D" id="3.30.70.240">
    <property type="match status" value="1"/>
</dbReference>
<dbReference type="Gene3D" id="2.40.50.250">
    <property type="entry name" value="bipa protein"/>
    <property type="match status" value="1"/>
</dbReference>
<dbReference type="Gene3D" id="3.30.70.870">
    <property type="entry name" value="Elongation Factor G (Translational Gtpase), domain 3"/>
    <property type="match status" value="1"/>
</dbReference>
<dbReference type="Gene3D" id="3.40.50.300">
    <property type="entry name" value="P-loop containing nucleotide triphosphate hydrolases"/>
    <property type="match status" value="1"/>
</dbReference>
<dbReference type="Gene3D" id="2.40.30.10">
    <property type="entry name" value="Translation factors"/>
    <property type="match status" value="1"/>
</dbReference>
<dbReference type="HAMAP" id="MF_00849">
    <property type="entry name" value="BipA"/>
    <property type="match status" value="1"/>
</dbReference>
<dbReference type="InterPro" id="IPR006298">
    <property type="entry name" value="BipA"/>
</dbReference>
<dbReference type="InterPro" id="IPR048876">
    <property type="entry name" value="BipA_C"/>
</dbReference>
<dbReference type="InterPro" id="IPR047041">
    <property type="entry name" value="BipA_GTP-bd_dom"/>
</dbReference>
<dbReference type="InterPro" id="IPR047042">
    <property type="entry name" value="BipA_II"/>
</dbReference>
<dbReference type="InterPro" id="IPR047043">
    <property type="entry name" value="BipA_III"/>
</dbReference>
<dbReference type="InterPro" id="IPR035651">
    <property type="entry name" value="BipA_V"/>
</dbReference>
<dbReference type="InterPro" id="IPR035647">
    <property type="entry name" value="EFG_III/V"/>
</dbReference>
<dbReference type="InterPro" id="IPR000640">
    <property type="entry name" value="EFG_V-like"/>
</dbReference>
<dbReference type="InterPro" id="IPR004161">
    <property type="entry name" value="EFTu-like_2"/>
</dbReference>
<dbReference type="InterPro" id="IPR031157">
    <property type="entry name" value="G_TR_CS"/>
</dbReference>
<dbReference type="InterPro" id="IPR027417">
    <property type="entry name" value="P-loop_NTPase"/>
</dbReference>
<dbReference type="InterPro" id="IPR005225">
    <property type="entry name" value="Small_GTP-bd"/>
</dbReference>
<dbReference type="InterPro" id="IPR000795">
    <property type="entry name" value="T_Tr_GTP-bd_dom"/>
</dbReference>
<dbReference type="InterPro" id="IPR009000">
    <property type="entry name" value="Transl_B-barrel_sf"/>
</dbReference>
<dbReference type="InterPro" id="IPR042116">
    <property type="entry name" value="TypA/BipA_C"/>
</dbReference>
<dbReference type="NCBIfam" id="NF007583">
    <property type="entry name" value="PRK10218.1"/>
    <property type="match status" value="1"/>
</dbReference>
<dbReference type="NCBIfam" id="TIGR00231">
    <property type="entry name" value="small_GTP"/>
    <property type="match status" value="1"/>
</dbReference>
<dbReference type="NCBIfam" id="TIGR01394">
    <property type="entry name" value="TypA_BipA"/>
    <property type="match status" value="1"/>
</dbReference>
<dbReference type="PANTHER" id="PTHR42908:SF8">
    <property type="entry name" value="TR-TYPE G DOMAIN-CONTAINING PROTEIN"/>
    <property type="match status" value="1"/>
</dbReference>
<dbReference type="PANTHER" id="PTHR42908">
    <property type="entry name" value="TRANSLATION ELONGATION FACTOR-RELATED"/>
    <property type="match status" value="1"/>
</dbReference>
<dbReference type="Pfam" id="PF21018">
    <property type="entry name" value="BipA_C"/>
    <property type="match status" value="1"/>
</dbReference>
<dbReference type="Pfam" id="PF00679">
    <property type="entry name" value="EFG_C"/>
    <property type="match status" value="1"/>
</dbReference>
<dbReference type="Pfam" id="PF00009">
    <property type="entry name" value="GTP_EFTU"/>
    <property type="match status" value="1"/>
</dbReference>
<dbReference type="Pfam" id="PF03144">
    <property type="entry name" value="GTP_EFTU_D2"/>
    <property type="match status" value="1"/>
</dbReference>
<dbReference type="PRINTS" id="PR00315">
    <property type="entry name" value="ELONGATNFCT"/>
</dbReference>
<dbReference type="SUPFAM" id="SSF54980">
    <property type="entry name" value="EF-G C-terminal domain-like"/>
    <property type="match status" value="2"/>
</dbReference>
<dbReference type="SUPFAM" id="SSF52540">
    <property type="entry name" value="P-loop containing nucleoside triphosphate hydrolases"/>
    <property type="match status" value="1"/>
</dbReference>
<dbReference type="SUPFAM" id="SSF50447">
    <property type="entry name" value="Translation proteins"/>
    <property type="match status" value="1"/>
</dbReference>
<dbReference type="PROSITE" id="PS00301">
    <property type="entry name" value="G_TR_1"/>
    <property type="match status" value="1"/>
</dbReference>
<dbReference type="PROSITE" id="PS51722">
    <property type="entry name" value="G_TR_2"/>
    <property type="match status" value="1"/>
</dbReference>
<accession>P0A3B3</accession>
<accession>Q9EXN7</accession>
<protein>
    <recommendedName>
        <fullName evidence="1">Large ribosomal subunit assembly factor BipA</fullName>
        <ecNumber evidence="1">3.6.5.-</ecNumber>
    </recommendedName>
    <alternativeName>
        <fullName evidence="2">50S ribosomal subunit assembly factor BipA</fullName>
    </alternativeName>
    <alternativeName>
        <fullName evidence="1">GTP-binding protein BipA</fullName>
    </alternativeName>
</protein>
<reference key="1">
    <citation type="journal article" date="2001" name="Nature">
        <title>Genome sequence of enterohaemorrhagic Escherichia coli O157:H7.</title>
        <authorList>
            <person name="Perna N.T."/>
            <person name="Plunkett G. III"/>
            <person name="Burland V."/>
            <person name="Mau B."/>
            <person name="Glasner J.D."/>
            <person name="Rose D.J."/>
            <person name="Mayhew G.F."/>
            <person name="Evans P.S."/>
            <person name="Gregor J."/>
            <person name="Kirkpatrick H.A."/>
            <person name="Posfai G."/>
            <person name="Hackett J."/>
            <person name="Klink S."/>
            <person name="Boutin A."/>
            <person name="Shao Y."/>
            <person name="Miller L."/>
            <person name="Grotbeck E.J."/>
            <person name="Davis N.W."/>
            <person name="Lim A."/>
            <person name="Dimalanta E.T."/>
            <person name="Potamousis K."/>
            <person name="Apodaca J."/>
            <person name="Anantharaman T.S."/>
            <person name="Lin J."/>
            <person name="Yen G."/>
            <person name="Schwartz D.C."/>
            <person name="Welch R.A."/>
            <person name="Blattner F.R."/>
        </authorList>
    </citation>
    <scope>NUCLEOTIDE SEQUENCE [LARGE SCALE GENOMIC DNA]</scope>
    <source>
        <strain>O157:H7 / EDL933 / ATCC 700927 / EHEC</strain>
    </source>
</reference>
<reference key="2">
    <citation type="journal article" date="2001" name="DNA Res.">
        <title>Complete genome sequence of enterohemorrhagic Escherichia coli O157:H7 and genomic comparison with a laboratory strain K-12.</title>
        <authorList>
            <person name="Hayashi T."/>
            <person name="Makino K."/>
            <person name="Ohnishi M."/>
            <person name="Kurokawa K."/>
            <person name="Ishii K."/>
            <person name="Yokoyama K."/>
            <person name="Han C.-G."/>
            <person name="Ohtsubo E."/>
            <person name="Nakayama K."/>
            <person name="Murata T."/>
            <person name="Tanaka M."/>
            <person name="Tobe T."/>
            <person name="Iida T."/>
            <person name="Takami H."/>
            <person name="Honda T."/>
            <person name="Sasakawa C."/>
            <person name="Ogasawara N."/>
            <person name="Yasunaga T."/>
            <person name="Kuhara S."/>
            <person name="Shiba T."/>
            <person name="Hattori M."/>
            <person name="Shinagawa H."/>
        </authorList>
    </citation>
    <scope>NUCLEOTIDE SEQUENCE [LARGE SCALE GENOMIC DNA]</scope>
    <source>
        <strain>O157:H7 / Sakai / RIMD 0509952 / EHEC</strain>
    </source>
</reference>
<comment type="function">
    <text evidence="1">A 50S ribosomal subunit assembly protein with GTPase activity, required for 50S subunit assembly at low temperatures, may also play a role in translation. Binds GTP and analogs. Binds the 70S ribosome between the 30S and 50S subunits, in a similar position as ribosome-bound EF-G; it contacts a number of ribosomal proteins, both rRNAs and the A-site tRNA.</text>
</comment>
<comment type="catalytic activity">
    <reaction evidence="1">
        <text>GTP + H2O = GDP + phosphate + H(+)</text>
        <dbReference type="Rhea" id="RHEA:19669"/>
        <dbReference type="ChEBI" id="CHEBI:15377"/>
        <dbReference type="ChEBI" id="CHEBI:15378"/>
        <dbReference type="ChEBI" id="CHEBI:37565"/>
        <dbReference type="ChEBI" id="CHEBI:43474"/>
        <dbReference type="ChEBI" id="CHEBI:58189"/>
    </reaction>
</comment>
<comment type="subunit">
    <text evidence="1">Monomer.</text>
</comment>
<comment type="subcellular location">
    <subcellularLocation>
        <location evidence="1">Cytoplasm</location>
    </subcellularLocation>
    <text evidence="1">Binds to ribosomes.</text>
</comment>
<comment type="similarity">
    <text evidence="1">Belongs to the TRAFAC class translation factor GTPase superfamily. Classic translation factor GTPase family. BipA subfamily.</text>
</comment>
<organism>
    <name type="scientific">Escherichia coli O157:H7</name>
    <dbReference type="NCBI Taxonomy" id="83334"/>
    <lineage>
        <taxon>Bacteria</taxon>
        <taxon>Pseudomonadati</taxon>
        <taxon>Pseudomonadota</taxon>
        <taxon>Gammaproteobacteria</taxon>
        <taxon>Enterobacterales</taxon>
        <taxon>Enterobacteriaceae</taxon>
        <taxon>Escherichia</taxon>
    </lineage>
</organism>